<proteinExistence type="inferred from homology"/>
<gene>
    <name evidence="1" type="primary">truD</name>
    <name type="ordered locus">Ecok1_26850</name>
    <name type="ORF">APECO1_3778</name>
</gene>
<accession>A1AET9</accession>
<dbReference type="EC" id="5.4.99.27" evidence="1"/>
<dbReference type="EMBL" id="CP000468">
    <property type="protein sequence ID" value="ABJ02179.1"/>
    <property type="molecule type" value="Genomic_DNA"/>
</dbReference>
<dbReference type="RefSeq" id="WP_000568928.1">
    <property type="nucleotide sequence ID" value="NZ_CADILS010000024.1"/>
</dbReference>
<dbReference type="SMR" id="A1AET9"/>
<dbReference type="KEGG" id="ecv:APECO1_3778"/>
<dbReference type="HOGENOM" id="CLU_005281_4_0_6"/>
<dbReference type="Proteomes" id="UP000008216">
    <property type="component" value="Chromosome"/>
</dbReference>
<dbReference type="GO" id="GO:0005829">
    <property type="term" value="C:cytosol"/>
    <property type="evidence" value="ECO:0007669"/>
    <property type="project" value="TreeGrafter"/>
</dbReference>
<dbReference type="GO" id="GO:0003723">
    <property type="term" value="F:RNA binding"/>
    <property type="evidence" value="ECO:0007669"/>
    <property type="project" value="InterPro"/>
</dbReference>
<dbReference type="GO" id="GO:0160150">
    <property type="term" value="F:tRNA pseudouridine(13) synthase activity"/>
    <property type="evidence" value="ECO:0007669"/>
    <property type="project" value="UniProtKB-EC"/>
</dbReference>
<dbReference type="GO" id="GO:0031119">
    <property type="term" value="P:tRNA pseudouridine synthesis"/>
    <property type="evidence" value="ECO:0007669"/>
    <property type="project" value="UniProtKB-UniRule"/>
</dbReference>
<dbReference type="CDD" id="cd02575">
    <property type="entry name" value="PseudoU_synth_EcTruD"/>
    <property type="match status" value="1"/>
</dbReference>
<dbReference type="FunFam" id="3.30.2340.10:FF:000001">
    <property type="entry name" value="tRNA pseudouridine synthase D"/>
    <property type="match status" value="1"/>
</dbReference>
<dbReference type="FunFam" id="3.30.2350.20:FF:000001">
    <property type="entry name" value="tRNA pseudouridine synthase D"/>
    <property type="match status" value="1"/>
</dbReference>
<dbReference type="Gene3D" id="3.30.2350.20">
    <property type="entry name" value="TruD, catalytic domain"/>
    <property type="match status" value="1"/>
</dbReference>
<dbReference type="Gene3D" id="3.30.2340.10">
    <property type="entry name" value="TruD, insertion domain"/>
    <property type="match status" value="1"/>
</dbReference>
<dbReference type="HAMAP" id="MF_01082">
    <property type="entry name" value="TruD"/>
    <property type="match status" value="1"/>
</dbReference>
<dbReference type="InterPro" id="IPR020103">
    <property type="entry name" value="PsdUridine_synth_cat_dom_sf"/>
</dbReference>
<dbReference type="InterPro" id="IPR001656">
    <property type="entry name" value="PsdUridine_synth_TruD"/>
</dbReference>
<dbReference type="InterPro" id="IPR020119">
    <property type="entry name" value="PsdUridine_synth_TruD_CS"/>
</dbReference>
<dbReference type="InterPro" id="IPR011760">
    <property type="entry name" value="PsdUridine_synth_TruD_insert"/>
</dbReference>
<dbReference type="InterPro" id="IPR042214">
    <property type="entry name" value="TruD_catalytic"/>
</dbReference>
<dbReference type="InterPro" id="IPR043165">
    <property type="entry name" value="TruD_insert_sf"/>
</dbReference>
<dbReference type="InterPro" id="IPR050170">
    <property type="entry name" value="TruD_pseudoU_synthase"/>
</dbReference>
<dbReference type="NCBIfam" id="NF002155">
    <property type="entry name" value="PRK00984.1-4"/>
    <property type="match status" value="1"/>
</dbReference>
<dbReference type="NCBIfam" id="TIGR00094">
    <property type="entry name" value="tRNA_TruD_broad"/>
    <property type="match status" value="1"/>
</dbReference>
<dbReference type="PANTHER" id="PTHR47811">
    <property type="entry name" value="TRNA PSEUDOURIDINE SYNTHASE D"/>
    <property type="match status" value="1"/>
</dbReference>
<dbReference type="PANTHER" id="PTHR47811:SF1">
    <property type="entry name" value="TRNA PSEUDOURIDINE SYNTHASE D"/>
    <property type="match status" value="1"/>
</dbReference>
<dbReference type="Pfam" id="PF01142">
    <property type="entry name" value="TruD"/>
    <property type="match status" value="2"/>
</dbReference>
<dbReference type="SUPFAM" id="SSF55120">
    <property type="entry name" value="Pseudouridine synthase"/>
    <property type="match status" value="1"/>
</dbReference>
<dbReference type="PROSITE" id="PS50984">
    <property type="entry name" value="TRUD"/>
    <property type="match status" value="1"/>
</dbReference>
<dbReference type="PROSITE" id="PS01268">
    <property type="entry name" value="UPF0024"/>
    <property type="match status" value="1"/>
</dbReference>
<reference key="1">
    <citation type="journal article" date="2007" name="J. Bacteriol.">
        <title>The genome sequence of avian pathogenic Escherichia coli strain O1:K1:H7 shares strong similarities with human extraintestinal pathogenic E. coli genomes.</title>
        <authorList>
            <person name="Johnson T.J."/>
            <person name="Kariyawasam S."/>
            <person name="Wannemuehler Y."/>
            <person name="Mangiamele P."/>
            <person name="Johnson S.J."/>
            <person name="Doetkott C."/>
            <person name="Skyberg J.A."/>
            <person name="Lynne A.M."/>
            <person name="Johnson J.R."/>
            <person name="Nolan L.K."/>
        </authorList>
    </citation>
    <scope>NUCLEOTIDE SEQUENCE [LARGE SCALE GENOMIC DNA]</scope>
</reference>
<feature type="chain" id="PRO_1000084736" description="tRNA pseudouridine synthase D">
    <location>
        <begin position="1"/>
        <end position="349"/>
    </location>
</feature>
<feature type="domain" description="TRUD" evidence="1">
    <location>
        <begin position="155"/>
        <end position="303"/>
    </location>
</feature>
<feature type="active site" description="Nucleophile" evidence="1">
    <location>
        <position position="80"/>
    </location>
</feature>
<feature type="binding site" evidence="1">
    <location>
        <position position="27"/>
    </location>
    <ligand>
        <name>substrate</name>
    </ligand>
</feature>
<feature type="binding site" evidence="1">
    <location>
        <position position="129"/>
    </location>
    <ligand>
        <name>substrate</name>
    </ligand>
</feature>
<feature type="binding site" evidence="1">
    <location>
        <position position="329"/>
    </location>
    <ligand>
        <name>substrate</name>
    </ligand>
</feature>
<keyword id="KW-0413">Isomerase</keyword>
<keyword id="KW-1185">Reference proteome</keyword>
<keyword id="KW-0819">tRNA processing</keyword>
<organism>
    <name type="scientific">Escherichia coli O1:K1 / APEC</name>
    <dbReference type="NCBI Taxonomy" id="405955"/>
    <lineage>
        <taxon>Bacteria</taxon>
        <taxon>Pseudomonadati</taxon>
        <taxon>Pseudomonadota</taxon>
        <taxon>Gammaproteobacteria</taxon>
        <taxon>Enterobacterales</taxon>
        <taxon>Enterobacteriaceae</taxon>
        <taxon>Escherichia</taxon>
    </lineage>
</organism>
<name>TRUD_ECOK1</name>
<comment type="function">
    <text evidence="1">Responsible for synthesis of pseudouridine from uracil-13 in transfer RNAs.</text>
</comment>
<comment type="catalytic activity">
    <reaction evidence="1">
        <text>uridine(13) in tRNA = pseudouridine(13) in tRNA</text>
        <dbReference type="Rhea" id="RHEA:42540"/>
        <dbReference type="Rhea" id="RHEA-COMP:10105"/>
        <dbReference type="Rhea" id="RHEA-COMP:10106"/>
        <dbReference type="ChEBI" id="CHEBI:65314"/>
        <dbReference type="ChEBI" id="CHEBI:65315"/>
        <dbReference type="EC" id="5.4.99.27"/>
    </reaction>
</comment>
<comment type="similarity">
    <text evidence="1">Belongs to the pseudouridine synthase TruD family.</text>
</comment>
<sequence length="349" mass="39146">MIEFDNLTYLHGKPQGTGLLKANPEDFVVVEDLGFEPDGEGEHILVRILKNGCNTRFVADALAKFLKIHAREVSFAGQKDKHAVTEQWLCARVPGKEMPDLSAFQLEGCQVLEYARHKRKLRLGALKGNAFTLVLREVSNRDDVEQRLIDICVKGVPNYFGAQRFGIGGSNLQGALRWAQTNTPVRDRNKRSFWLSAARSALFNQIVAERLKKADVNQVVDGDALQLAGRGSWFVATTEELAELQRRVNDKELMITAALPGSGEWGTQREALAFEQAAVAEETELQTLLVREKVEAARRAMLLYPQQLSWNWWDDVTVEIHFWLPAGSFATSVVRELINTTGDYAHIAE</sequence>
<protein>
    <recommendedName>
        <fullName evidence="1">tRNA pseudouridine synthase D</fullName>
        <ecNumber evidence="1">5.4.99.27</ecNumber>
    </recommendedName>
    <alternativeName>
        <fullName evidence="1">tRNA pseudouridine(13) synthase</fullName>
    </alternativeName>
    <alternativeName>
        <fullName evidence="1">tRNA pseudouridylate synthase D</fullName>
    </alternativeName>
    <alternativeName>
        <fullName evidence="1">tRNA-uridine isomerase D</fullName>
    </alternativeName>
</protein>
<evidence type="ECO:0000255" key="1">
    <source>
        <dbReference type="HAMAP-Rule" id="MF_01082"/>
    </source>
</evidence>